<sequence length="1116" mass="120541">MSLNLSAEEQTAFDQLFKIADKQDIGVITGEEAVPFLEKSGLAPQVLGQIWQIADAENRGFLTFSGFVIAMRLVALAQEKLPFDYKKSGKIPYFADIHISGVDSSKFVQLNRPNNVSSGDGSDGSFLPPISSDEMTRYQQMFTTVCPTDGLMDGDRASSIFGRAPLSTEILARVWNLVDTHKRGALDIREFNTGMHIINLLLNGSLKSPPVSISPSFIASAASTSSVSAPSQYPGLSRSPPVQAPNIPVSDPWAIPSQDLTSFCQLFSNVDKAHKGYVSGSEAYSFFLASKLPEDVLAQIWDLSDTNSNGKLNIGEFCISLYLIKLKLSGKELPKVLPSSMLSSVAPLMQKSKSVPTSIPSVVPANISSPNPNPTLAPNPTGPSRVTSGTEDLLSLDATPFSPTLAPQHTSSNATKHSAPPVTKSAPFPVVSPLQLNHTPGFPTSPAAKPNSPTSTFFPQSSFGQTIAKNTMDKPSAVRTSVPSQLAAPIPQVASAEQLKLAAEVPKLESQLSQVKKSNDDLQKSSRDVAANLSDVKAKVSEIRKAYDEELAKAKQISLDIETNKAQTEQVNREYSILEATLNALQKQNKQKGEVLEQVVAESEAAKNMVESSNASIQQLKSEVADKEQTLAQLHLQLDEMTQRLVSLDEESKAVSQRKLDLEYKINNSKTQLATATEEYHEHSKQLEAEKQELSKLEDGLKSVNLTEEAPKPEVDSTPRFPSFTSNGITTDKPTLPDTTSSVPTQHNSFDAMHNTLRSPSLNSNNSSAHASTVSRNPFHNLKISGASSPVSNFWESEFASAVFPRSISKTTSLSVNNSSVNPSLDSEPVQLSNMEEPQHQDSSVVDVSTSASQRGSPVLSDLSKLTGSARNTAEPVENTSAEPIENTSAPTPFEIANKQQATEPISAPFATETISTPAPVKPPVPPSRRDRSAQDGVVQQATPHIQDEFPPIQFNEIDDDESSSDEEPPMSNLSPQISIGSVTNYTSAVTELPDPNHQLEMSTTTHVQHPNSETIPSSTENQYFDTTSGAFEANSNTEVTVNSNEVSQPFDFDTANESDNDDDELPVQQVVSGSLANDAFNVDDEFDNQFANLQAAEIKDDDNSSTDEEEHAGHH</sequence>
<dbReference type="EMBL" id="CU329671">
    <property type="protein sequence ID" value="CAC01525.1"/>
    <property type="molecule type" value="Genomic_DNA"/>
</dbReference>
<dbReference type="SMR" id="Q9HGL2"/>
<dbReference type="BioGRID" id="277342">
    <property type="interactions" value="1"/>
</dbReference>
<dbReference type="FunCoup" id="Q9HGL2">
    <property type="interactions" value="111"/>
</dbReference>
<dbReference type="STRING" id="284812.Q9HGL2"/>
<dbReference type="iPTMnet" id="Q9HGL2"/>
<dbReference type="PaxDb" id="4896-SPBC800.10c.1"/>
<dbReference type="EnsemblFungi" id="SPBC800.10c.1">
    <property type="protein sequence ID" value="SPBC800.10c.1:pep"/>
    <property type="gene ID" value="SPBC800.10c"/>
</dbReference>
<dbReference type="KEGG" id="spo:2540824"/>
<dbReference type="PomBase" id="SPBC800.10c"/>
<dbReference type="VEuPathDB" id="FungiDB:SPBC800.10c"/>
<dbReference type="eggNOG" id="KOG0998">
    <property type="taxonomic scope" value="Eukaryota"/>
</dbReference>
<dbReference type="HOGENOM" id="CLU_285772_0_0_1"/>
<dbReference type="InParanoid" id="Q9HGL2"/>
<dbReference type="OMA" id="DYQKFSQ"/>
<dbReference type="PhylomeDB" id="Q9HGL2"/>
<dbReference type="Reactome" id="R-SPO-416482">
    <property type="pathway name" value="G alpha (12/13) signalling events"/>
</dbReference>
<dbReference type="Reactome" id="R-SPO-8856825">
    <property type="pathway name" value="Cargo recognition for clathrin-mediated endocytosis"/>
</dbReference>
<dbReference type="Reactome" id="R-SPO-8856828">
    <property type="pathway name" value="Clathrin-mediated endocytosis"/>
</dbReference>
<dbReference type="Reactome" id="R-SPO-9013148">
    <property type="pathway name" value="CDC42 GTPase cycle"/>
</dbReference>
<dbReference type="Reactome" id="R-SPO-9013406">
    <property type="pathway name" value="RHOQ GTPase cycle"/>
</dbReference>
<dbReference type="Reactome" id="R-SPO-9013420">
    <property type="pathway name" value="RHOU GTPase cycle"/>
</dbReference>
<dbReference type="PRO" id="PR:Q9HGL2"/>
<dbReference type="Proteomes" id="UP000002485">
    <property type="component" value="Chromosome II"/>
</dbReference>
<dbReference type="GO" id="GO:0030479">
    <property type="term" value="C:actin cortical patch"/>
    <property type="evidence" value="ECO:0000266"/>
    <property type="project" value="PomBase"/>
</dbReference>
<dbReference type="GO" id="GO:0005938">
    <property type="term" value="C:cell cortex"/>
    <property type="evidence" value="ECO:0007005"/>
    <property type="project" value="PomBase"/>
</dbReference>
<dbReference type="GO" id="GO:0032153">
    <property type="term" value="C:cell division site"/>
    <property type="evidence" value="ECO:0000314"/>
    <property type="project" value="PomBase"/>
</dbReference>
<dbReference type="GO" id="GO:0005737">
    <property type="term" value="C:cytoplasm"/>
    <property type="evidence" value="ECO:0000318"/>
    <property type="project" value="GO_Central"/>
</dbReference>
<dbReference type="GO" id="GO:0035838">
    <property type="term" value="C:growing cell tip"/>
    <property type="evidence" value="ECO:0000314"/>
    <property type="project" value="PomBase"/>
</dbReference>
<dbReference type="GO" id="GO:0005886">
    <property type="term" value="C:plasma membrane"/>
    <property type="evidence" value="ECO:0000318"/>
    <property type="project" value="GO_Central"/>
</dbReference>
<dbReference type="GO" id="GO:0005509">
    <property type="term" value="F:calcium ion binding"/>
    <property type="evidence" value="ECO:0000255"/>
    <property type="project" value="PomBase"/>
</dbReference>
<dbReference type="GO" id="GO:0000147">
    <property type="term" value="P:actin cortical patch assembly"/>
    <property type="evidence" value="ECO:0000266"/>
    <property type="project" value="PomBase"/>
</dbReference>
<dbReference type="GO" id="GO:0006897">
    <property type="term" value="P:endocytosis"/>
    <property type="evidence" value="ECO:0000318"/>
    <property type="project" value="GO_Central"/>
</dbReference>
<dbReference type="GO" id="GO:0016197">
    <property type="term" value="P:endosomal transport"/>
    <property type="evidence" value="ECO:0000318"/>
    <property type="project" value="GO_Central"/>
</dbReference>
<dbReference type="GO" id="GO:0006886">
    <property type="term" value="P:intracellular protein transport"/>
    <property type="evidence" value="ECO:0000305"/>
    <property type="project" value="PomBase"/>
</dbReference>
<dbReference type="CDD" id="cd00052">
    <property type="entry name" value="EH"/>
    <property type="match status" value="3"/>
</dbReference>
<dbReference type="Gene3D" id="1.10.238.10">
    <property type="entry name" value="EF-hand"/>
    <property type="match status" value="3"/>
</dbReference>
<dbReference type="InterPro" id="IPR011992">
    <property type="entry name" value="EF-hand-dom_pair"/>
</dbReference>
<dbReference type="InterPro" id="IPR018247">
    <property type="entry name" value="EF_Hand_1_Ca_BS"/>
</dbReference>
<dbReference type="InterPro" id="IPR002048">
    <property type="entry name" value="EF_hand_dom"/>
</dbReference>
<dbReference type="InterPro" id="IPR000261">
    <property type="entry name" value="EH_dom"/>
</dbReference>
<dbReference type="PANTHER" id="PTHR11216:SF170">
    <property type="entry name" value="DYNAMIN ASSOCIATED PROTEIN 160, ISOFORM D"/>
    <property type="match status" value="1"/>
</dbReference>
<dbReference type="PANTHER" id="PTHR11216">
    <property type="entry name" value="EH DOMAIN"/>
    <property type="match status" value="1"/>
</dbReference>
<dbReference type="Pfam" id="PF12763">
    <property type="entry name" value="EH"/>
    <property type="match status" value="3"/>
</dbReference>
<dbReference type="SMART" id="SM00054">
    <property type="entry name" value="EFh"/>
    <property type="match status" value="3"/>
</dbReference>
<dbReference type="SMART" id="SM00027">
    <property type="entry name" value="EH"/>
    <property type="match status" value="3"/>
</dbReference>
<dbReference type="SUPFAM" id="SSF47473">
    <property type="entry name" value="EF-hand"/>
    <property type="match status" value="3"/>
</dbReference>
<dbReference type="PROSITE" id="PS00018">
    <property type="entry name" value="EF_HAND_1"/>
    <property type="match status" value="1"/>
</dbReference>
<dbReference type="PROSITE" id="PS50222">
    <property type="entry name" value="EF_HAND_2"/>
    <property type="match status" value="4"/>
</dbReference>
<dbReference type="PROSITE" id="PS50031">
    <property type="entry name" value="EH"/>
    <property type="match status" value="3"/>
</dbReference>
<reference key="1">
    <citation type="journal article" date="2002" name="Nature">
        <title>The genome sequence of Schizosaccharomyces pombe.</title>
        <authorList>
            <person name="Wood V."/>
            <person name="Gwilliam R."/>
            <person name="Rajandream M.A."/>
            <person name="Lyne M.H."/>
            <person name="Lyne R."/>
            <person name="Stewart A."/>
            <person name="Sgouros J.G."/>
            <person name="Peat N."/>
            <person name="Hayles J."/>
            <person name="Baker S.G."/>
            <person name="Basham D."/>
            <person name="Bowman S."/>
            <person name="Brooks K."/>
            <person name="Brown D."/>
            <person name="Brown S."/>
            <person name="Chillingworth T."/>
            <person name="Churcher C.M."/>
            <person name="Collins M."/>
            <person name="Connor R."/>
            <person name="Cronin A."/>
            <person name="Davis P."/>
            <person name="Feltwell T."/>
            <person name="Fraser A."/>
            <person name="Gentles S."/>
            <person name="Goble A."/>
            <person name="Hamlin N."/>
            <person name="Harris D.E."/>
            <person name="Hidalgo J."/>
            <person name="Hodgson G."/>
            <person name="Holroyd S."/>
            <person name="Hornsby T."/>
            <person name="Howarth S."/>
            <person name="Huckle E.J."/>
            <person name="Hunt S."/>
            <person name="Jagels K."/>
            <person name="James K.D."/>
            <person name="Jones L."/>
            <person name="Jones M."/>
            <person name="Leather S."/>
            <person name="McDonald S."/>
            <person name="McLean J."/>
            <person name="Mooney P."/>
            <person name="Moule S."/>
            <person name="Mungall K.L."/>
            <person name="Murphy L.D."/>
            <person name="Niblett D."/>
            <person name="Odell C."/>
            <person name="Oliver K."/>
            <person name="O'Neil S."/>
            <person name="Pearson D."/>
            <person name="Quail M.A."/>
            <person name="Rabbinowitsch E."/>
            <person name="Rutherford K.M."/>
            <person name="Rutter S."/>
            <person name="Saunders D."/>
            <person name="Seeger K."/>
            <person name="Sharp S."/>
            <person name="Skelton J."/>
            <person name="Simmonds M.N."/>
            <person name="Squares R."/>
            <person name="Squares S."/>
            <person name="Stevens K."/>
            <person name="Taylor K."/>
            <person name="Taylor R.G."/>
            <person name="Tivey A."/>
            <person name="Walsh S.V."/>
            <person name="Warren T."/>
            <person name="Whitehead S."/>
            <person name="Woodward J.R."/>
            <person name="Volckaert G."/>
            <person name="Aert R."/>
            <person name="Robben J."/>
            <person name="Grymonprez B."/>
            <person name="Weltjens I."/>
            <person name="Vanstreels E."/>
            <person name="Rieger M."/>
            <person name="Schaefer M."/>
            <person name="Mueller-Auer S."/>
            <person name="Gabel C."/>
            <person name="Fuchs M."/>
            <person name="Duesterhoeft A."/>
            <person name="Fritzc C."/>
            <person name="Holzer E."/>
            <person name="Moestl D."/>
            <person name="Hilbert H."/>
            <person name="Borzym K."/>
            <person name="Langer I."/>
            <person name="Beck A."/>
            <person name="Lehrach H."/>
            <person name="Reinhardt R."/>
            <person name="Pohl T.M."/>
            <person name="Eger P."/>
            <person name="Zimmermann W."/>
            <person name="Wedler H."/>
            <person name="Wambutt R."/>
            <person name="Purnelle B."/>
            <person name="Goffeau A."/>
            <person name="Cadieu E."/>
            <person name="Dreano S."/>
            <person name="Gloux S."/>
            <person name="Lelaure V."/>
            <person name="Mottier S."/>
            <person name="Galibert F."/>
            <person name="Aves S.J."/>
            <person name="Xiang Z."/>
            <person name="Hunt C."/>
            <person name="Moore K."/>
            <person name="Hurst S.M."/>
            <person name="Lucas M."/>
            <person name="Rochet M."/>
            <person name="Gaillardin C."/>
            <person name="Tallada V.A."/>
            <person name="Garzon A."/>
            <person name="Thode G."/>
            <person name="Daga R.R."/>
            <person name="Cruzado L."/>
            <person name="Jimenez J."/>
            <person name="Sanchez M."/>
            <person name="del Rey F."/>
            <person name="Benito J."/>
            <person name="Dominguez A."/>
            <person name="Revuelta J.L."/>
            <person name="Moreno S."/>
            <person name="Armstrong J."/>
            <person name="Forsburg S.L."/>
            <person name="Cerutti L."/>
            <person name="Lowe T."/>
            <person name="McCombie W.R."/>
            <person name="Paulsen I."/>
            <person name="Potashkin J."/>
            <person name="Shpakovski G.V."/>
            <person name="Ussery D."/>
            <person name="Barrell B.G."/>
            <person name="Nurse P."/>
        </authorList>
    </citation>
    <scope>NUCLEOTIDE SEQUENCE [LARGE SCALE GENOMIC DNA]</scope>
    <source>
        <strain>972 / ATCC 24843</strain>
    </source>
</reference>
<reference key="2">
    <citation type="journal article" date="2006" name="Nat. Biotechnol.">
        <title>ORFeome cloning and global analysis of protein localization in the fission yeast Schizosaccharomyces pombe.</title>
        <authorList>
            <person name="Matsuyama A."/>
            <person name="Arai R."/>
            <person name="Yashiroda Y."/>
            <person name="Shirai A."/>
            <person name="Kamata A."/>
            <person name="Sekido S."/>
            <person name="Kobayashi Y."/>
            <person name="Hashimoto A."/>
            <person name="Hamamoto M."/>
            <person name="Hiraoka Y."/>
            <person name="Horinouchi S."/>
            <person name="Yoshida M."/>
        </authorList>
    </citation>
    <scope>SUBCELLULAR LOCATION [LARGE SCALE ANALYSIS]</scope>
</reference>
<evidence type="ECO:0000255" key="1"/>
<evidence type="ECO:0000255" key="2">
    <source>
        <dbReference type="PROSITE-ProRule" id="PRU00077"/>
    </source>
</evidence>
<evidence type="ECO:0000255" key="3">
    <source>
        <dbReference type="PROSITE-ProRule" id="PRU00448"/>
    </source>
</evidence>
<evidence type="ECO:0000256" key="4">
    <source>
        <dbReference type="SAM" id="MobiDB-lite"/>
    </source>
</evidence>
<evidence type="ECO:0000269" key="5">
    <source>
    </source>
</evidence>
<keyword id="KW-0106">Calcium</keyword>
<keyword id="KW-0175">Coiled coil</keyword>
<keyword id="KW-0963">Cytoplasm</keyword>
<keyword id="KW-0206">Cytoskeleton</keyword>
<keyword id="KW-0479">Metal-binding</keyword>
<keyword id="KW-1185">Reference proteome</keyword>
<keyword id="KW-0677">Repeat</keyword>
<comment type="subcellular location">
    <subcellularLocation>
        <location evidence="5">Cytoplasm</location>
        <location evidence="5">Cytoskeleton</location>
    </subcellularLocation>
</comment>
<protein>
    <recommendedName>
        <fullName>Uncharacterized calcium-binding protein C800.10c</fullName>
    </recommendedName>
</protein>
<gene>
    <name type="ORF">SPBC800.10c</name>
</gene>
<organism>
    <name type="scientific">Schizosaccharomyces pombe (strain 972 / ATCC 24843)</name>
    <name type="common">Fission yeast</name>
    <dbReference type="NCBI Taxonomy" id="284812"/>
    <lineage>
        <taxon>Eukaryota</taxon>
        <taxon>Fungi</taxon>
        <taxon>Dikarya</taxon>
        <taxon>Ascomycota</taxon>
        <taxon>Taphrinomycotina</taxon>
        <taxon>Schizosaccharomycetes</taxon>
        <taxon>Schizosaccharomycetales</taxon>
        <taxon>Schizosaccharomycetaceae</taxon>
        <taxon>Schizosaccharomyces</taxon>
    </lineage>
</organism>
<accession>Q9HGL2</accession>
<feature type="chain" id="PRO_0000310332" description="Uncharacterized calcium-binding protein C800.10c">
    <location>
        <begin position="1"/>
        <end position="1116"/>
    </location>
</feature>
<feature type="domain" description="EF-hand 1" evidence="3">
    <location>
        <begin position="8"/>
        <end position="43"/>
    </location>
</feature>
<feature type="domain" description="EH 1" evidence="2">
    <location>
        <begin position="9"/>
        <end position="106"/>
    </location>
</feature>
<feature type="domain" description="EF-hand 2" evidence="3">
    <location>
        <begin position="42"/>
        <end position="77"/>
    </location>
</feature>
<feature type="domain" description="EH 2" evidence="2">
    <location>
        <begin position="134"/>
        <end position="224"/>
    </location>
</feature>
<feature type="domain" description="EF-hand 3" evidence="3">
    <location>
        <begin position="166"/>
        <end position="201"/>
    </location>
</feature>
<feature type="domain" description="EH 3" evidence="2">
    <location>
        <begin position="259"/>
        <end position="348"/>
    </location>
</feature>
<feature type="domain" description="EF-hand 4" evidence="3">
    <location>
        <begin position="292"/>
        <end position="327"/>
    </location>
</feature>
<feature type="region of interest" description="Disordered" evidence="4">
    <location>
        <begin position="360"/>
        <end position="454"/>
    </location>
</feature>
<feature type="region of interest" description="Disordered" evidence="4">
    <location>
        <begin position="703"/>
        <end position="774"/>
    </location>
</feature>
<feature type="region of interest" description="Disordered" evidence="4">
    <location>
        <begin position="812"/>
        <end position="890"/>
    </location>
</feature>
<feature type="region of interest" description="Disordered" evidence="4">
    <location>
        <begin position="909"/>
        <end position="978"/>
    </location>
</feature>
<feature type="region of interest" description="Disordered" evidence="4">
    <location>
        <begin position="1004"/>
        <end position="1024"/>
    </location>
</feature>
<feature type="region of interest" description="Disordered" evidence="4">
    <location>
        <begin position="1044"/>
        <end position="1066"/>
    </location>
</feature>
<feature type="region of interest" description="Disordered" evidence="4">
    <location>
        <begin position="1095"/>
        <end position="1116"/>
    </location>
</feature>
<feature type="coiled-coil region" evidence="1">
    <location>
        <begin position="565"/>
        <end position="707"/>
    </location>
</feature>
<feature type="compositionally biased region" description="Pro residues" evidence="4">
    <location>
        <begin position="371"/>
        <end position="381"/>
    </location>
</feature>
<feature type="compositionally biased region" description="Polar residues" evidence="4">
    <location>
        <begin position="401"/>
        <end position="416"/>
    </location>
</feature>
<feature type="compositionally biased region" description="Polar residues" evidence="4">
    <location>
        <begin position="723"/>
        <end position="749"/>
    </location>
</feature>
<feature type="compositionally biased region" description="Low complexity" evidence="4">
    <location>
        <begin position="755"/>
        <end position="774"/>
    </location>
</feature>
<feature type="compositionally biased region" description="Low complexity" evidence="4">
    <location>
        <begin position="812"/>
        <end position="827"/>
    </location>
</feature>
<feature type="compositionally biased region" description="Polar residues" evidence="4">
    <location>
        <begin position="864"/>
        <end position="890"/>
    </location>
</feature>
<feature type="compositionally biased region" description="Acidic residues" evidence="4">
    <location>
        <begin position="957"/>
        <end position="969"/>
    </location>
</feature>
<feature type="compositionally biased region" description="Acidic residues" evidence="4">
    <location>
        <begin position="1055"/>
        <end position="1066"/>
    </location>
</feature>
<feature type="compositionally biased region" description="Acidic residues" evidence="4">
    <location>
        <begin position="1104"/>
        <end position="1116"/>
    </location>
</feature>
<feature type="binding site" evidence="3">
    <location>
        <position position="305"/>
    </location>
    <ligand>
        <name>Ca(2+)</name>
        <dbReference type="ChEBI" id="CHEBI:29108"/>
    </ligand>
</feature>
<feature type="binding site" evidence="3">
    <location>
        <position position="307"/>
    </location>
    <ligand>
        <name>Ca(2+)</name>
        <dbReference type="ChEBI" id="CHEBI:29108"/>
    </ligand>
</feature>
<feature type="binding site" evidence="3">
    <location>
        <position position="309"/>
    </location>
    <ligand>
        <name>Ca(2+)</name>
        <dbReference type="ChEBI" id="CHEBI:29108"/>
    </ligand>
</feature>
<feature type="binding site" evidence="3">
    <location>
        <position position="311"/>
    </location>
    <ligand>
        <name>Ca(2+)</name>
        <dbReference type="ChEBI" id="CHEBI:29108"/>
    </ligand>
</feature>
<feature type="binding site" evidence="3">
    <location>
        <position position="316"/>
    </location>
    <ligand>
        <name>Ca(2+)</name>
        <dbReference type="ChEBI" id="CHEBI:29108"/>
    </ligand>
</feature>
<name>YHLA_SCHPO</name>
<proteinExistence type="predicted"/>